<accession>Q3U435</accession>
<gene>
    <name type="primary">Mmp25</name>
</gene>
<proteinExistence type="evidence at transcript level"/>
<reference key="1">
    <citation type="journal article" date="2005" name="Science">
        <title>The transcriptional landscape of the mammalian genome.</title>
        <authorList>
            <person name="Carninci P."/>
            <person name="Kasukawa T."/>
            <person name="Katayama S."/>
            <person name="Gough J."/>
            <person name="Frith M.C."/>
            <person name="Maeda N."/>
            <person name="Oyama R."/>
            <person name="Ravasi T."/>
            <person name="Lenhard B."/>
            <person name="Wells C."/>
            <person name="Kodzius R."/>
            <person name="Shimokawa K."/>
            <person name="Bajic V.B."/>
            <person name="Brenner S.E."/>
            <person name="Batalov S."/>
            <person name="Forrest A.R."/>
            <person name="Zavolan M."/>
            <person name="Davis M.J."/>
            <person name="Wilming L.G."/>
            <person name="Aidinis V."/>
            <person name="Allen J.E."/>
            <person name="Ambesi-Impiombato A."/>
            <person name="Apweiler R."/>
            <person name="Aturaliya R.N."/>
            <person name="Bailey T.L."/>
            <person name="Bansal M."/>
            <person name="Baxter L."/>
            <person name="Beisel K.W."/>
            <person name="Bersano T."/>
            <person name="Bono H."/>
            <person name="Chalk A.M."/>
            <person name="Chiu K.P."/>
            <person name="Choudhary V."/>
            <person name="Christoffels A."/>
            <person name="Clutterbuck D.R."/>
            <person name="Crowe M.L."/>
            <person name="Dalla E."/>
            <person name="Dalrymple B.P."/>
            <person name="de Bono B."/>
            <person name="Della Gatta G."/>
            <person name="di Bernardo D."/>
            <person name="Down T."/>
            <person name="Engstrom P."/>
            <person name="Fagiolini M."/>
            <person name="Faulkner G."/>
            <person name="Fletcher C.F."/>
            <person name="Fukushima T."/>
            <person name="Furuno M."/>
            <person name="Futaki S."/>
            <person name="Gariboldi M."/>
            <person name="Georgii-Hemming P."/>
            <person name="Gingeras T.R."/>
            <person name="Gojobori T."/>
            <person name="Green R.E."/>
            <person name="Gustincich S."/>
            <person name="Harbers M."/>
            <person name="Hayashi Y."/>
            <person name="Hensch T.K."/>
            <person name="Hirokawa N."/>
            <person name="Hill D."/>
            <person name="Huminiecki L."/>
            <person name="Iacono M."/>
            <person name="Ikeo K."/>
            <person name="Iwama A."/>
            <person name="Ishikawa T."/>
            <person name="Jakt M."/>
            <person name="Kanapin A."/>
            <person name="Katoh M."/>
            <person name="Kawasawa Y."/>
            <person name="Kelso J."/>
            <person name="Kitamura H."/>
            <person name="Kitano H."/>
            <person name="Kollias G."/>
            <person name="Krishnan S.P."/>
            <person name="Kruger A."/>
            <person name="Kummerfeld S.K."/>
            <person name="Kurochkin I.V."/>
            <person name="Lareau L.F."/>
            <person name="Lazarevic D."/>
            <person name="Lipovich L."/>
            <person name="Liu J."/>
            <person name="Liuni S."/>
            <person name="McWilliam S."/>
            <person name="Madan Babu M."/>
            <person name="Madera M."/>
            <person name="Marchionni L."/>
            <person name="Matsuda H."/>
            <person name="Matsuzawa S."/>
            <person name="Miki H."/>
            <person name="Mignone F."/>
            <person name="Miyake S."/>
            <person name="Morris K."/>
            <person name="Mottagui-Tabar S."/>
            <person name="Mulder N."/>
            <person name="Nakano N."/>
            <person name="Nakauchi H."/>
            <person name="Ng P."/>
            <person name="Nilsson R."/>
            <person name="Nishiguchi S."/>
            <person name="Nishikawa S."/>
            <person name="Nori F."/>
            <person name="Ohara O."/>
            <person name="Okazaki Y."/>
            <person name="Orlando V."/>
            <person name="Pang K.C."/>
            <person name="Pavan W.J."/>
            <person name="Pavesi G."/>
            <person name="Pesole G."/>
            <person name="Petrovsky N."/>
            <person name="Piazza S."/>
            <person name="Reed J."/>
            <person name="Reid J.F."/>
            <person name="Ring B.Z."/>
            <person name="Ringwald M."/>
            <person name="Rost B."/>
            <person name="Ruan Y."/>
            <person name="Salzberg S.L."/>
            <person name="Sandelin A."/>
            <person name="Schneider C."/>
            <person name="Schoenbach C."/>
            <person name="Sekiguchi K."/>
            <person name="Semple C.A."/>
            <person name="Seno S."/>
            <person name="Sessa L."/>
            <person name="Sheng Y."/>
            <person name="Shibata Y."/>
            <person name="Shimada H."/>
            <person name="Shimada K."/>
            <person name="Silva D."/>
            <person name="Sinclair B."/>
            <person name="Sperling S."/>
            <person name="Stupka E."/>
            <person name="Sugiura K."/>
            <person name="Sultana R."/>
            <person name="Takenaka Y."/>
            <person name="Taki K."/>
            <person name="Tammoja K."/>
            <person name="Tan S.L."/>
            <person name="Tang S."/>
            <person name="Taylor M.S."/>
            <person name="Tegner J."/>
            <person name="Teichmann S.A."/>
            <person name="Ueda H.R."/>
            <person name="van Nimwegen E."/>
            <person name="Verardo R."/>
            <person name="Wei C.L."/>
            <person name="Yagi K."/>
            <person name="Yamanishi H."/>
            <person name="Zabarovsky E."/>
            <person name="Zhu S."/>
            <person name="Zimmer A."/>
            <person name="Hide W."/>
            <person name="Bult C."/>
            <person name="Grimmond S.M."/>
            <person name="Teasdale R.D."/>
            <person name="Liu E.T."/>
            <person name="Brusic V."/>
            <person name="Quackenbush J."/>
            <person name="Wahlestedt C."/>
            <person name="Mattick J.S."/>
            <person name="Hume D.A."/>
            <person name="Kai C."/>
            <person name="Sasaki D."/>
            <person name="Tomaru Y."/>
            <person name="Fukuda S."/>
            <person name="Kanamori-Katayama M."/>
            <person name="Suzuki M."/>
            <person name="Aoki J."/>
            <person name="Arakawa T."/>
            <person name="Iida J."/>
            <person name="Imamura K."/>
            <person name="Itoh M."/>
            <person name="Kato T."/>
            <person name="Kawaji H."/>
            <person name="Kawagashira N."/>
            <person name="Kawashima T."/>
            <person name="Kojima M."/>
            <person name="Kondo S."/>
            <person name="Konno H."/>
            <person name="Nakano K."/>
            <person name="Ninomiya N."/>
            <person name="Nishio T."/>
            <person name="Okada M."/>
            <person name="Plessy C."/>
            <person name="Shibata K."/>
            <person name="Shiraki T."/>
            <person name="Suzuki S."/>
            <person name="Tagami M."/>
            <person name="Waki K."/>
            <person name="Watahiki A."/>
            <person name="Okamura-Oho Y."/>
            <person name="Suzuki H."/>
            <person name="Kawai J."/>
            <person name="Hayashizaki Y."/>
        </authorList>
    </citation>
    <scope>NUCLEOTIDE SEQUENCE [LARGE SCALE MRNA]</scope>
    <source>
        <strain>NOD</strain>
    </source>
</reference>
<reference key="2">
    <citation type="journal article" date="2004" name="Genome Res.">
        <title>The status, quality, and expansion of the NIH full-length cDNA project: the Mammalian Gene Collection (MGC).</title>
        <authorList>
            <consortium name="The MGC Project Team"/>
        </authorList>
    </citation>
    <scope>NUCLEOTIDE SEQUENCE [LARGE SCALE MRNA]</scope>
</reference>
<organism>
    <name type="scientific">Mus musculus</name>
    <name type="common">Mouse</name>
    <dbReference type="NCBI Taxonomy" id="10090"/>
    <lineage>
        <taxon>Eukaryota</taxon>
        <taxon>Metazoa</taxon>
        <taxon>Chordata</taxon>
        <taxon>Craniata</taxon>
        <taxon>Vertebrata</taxon>
        <taxon>Euteleostomi</taxon>
        <taxon>Mammalia</taxon>
        <taxon>Eutheria</taxon>
        <taxon>Euarchontoglires</taxon>
        <taxon>Glires</taxon>
        <taxon>Rodentia</taxon>
        <taxon>Myomorpha</taxon>
        <taxon>Muroidea</taxon>
        <taxon>Muridae</taxon>
        <taxon>Murinae</taxon>
        <taxon>Mus</taxon>
        <taxon>Mus</taxon>
    </lineage>
</organism>
<dbReference type="EC" id="3.4.24.-"/>
<dbReference type="EMBL" id="AK154458">
    <property type="protein sequence ID" value="BAE32600.1"/>
    <property type="molecule type" value="mRNA"/>
</dbReference>
<dbReference type="EMBL" id="BC112379">
    <property type="protein sequence ID" value="AAI12380.1"/>
    <property type="molecule type" value="mRNA"/>
</dbReference>
<dbReference type="CCDS" id="CCDS28452.1"/>
<dbReference type="RefSeq" id="NP_001028511.1">
    <property type="nucleotide sequence ID" value="NM_001033339.5"/>
</dbReference>
<dbReference type="SMR" id="Q3U435"/>
<dbReference type="FunCoup" id="Q3U435">
    <property type="interactions" value="93"/>
</dbReference>
<dbReference type="STRING" id="10090.ENSMUSP00000024696"/>
<dbReference type="MEROPS" id="M10.024"/>
<dbReference type="PhosphoSitePlus" id="Q3U435"/>
<dbReference type="PaxDb" id="10090-ENSMUSP00000024696"/>
<dbReference type="ProteomicsDB" id="295690"/>
<dbReference type="Antibodypedia" id="10685">
    <property type="antibodies" value="303 antibodies from 30 providers"/>
</dbReference>
<dbReference type="DNASU" id="240047"/>
<dbReference type="Ensembl" id="ENSMUST00000024696.9">
    <property type="protein sequence ID" value="ENSMUSP00000024696.8"/>
    <property type="gene ID" value="ENSMUSG00000023903.9"/>
</dbReference>
<dbReference type="GeneID" id="240047"/>
<dbReference type="KEGG" id="mmu:240047"/>
<dbReference type="UCSC" id="uc008asq.1">
    <property type="organism name" value="mouse"/>
</dbReference>
<dbReference type="AGR" id="MGI:2443938"/>
<dbReference type="CTD" id="64386"/>
<dbReference type="MGI" id="MGI:2443938">
    <property type="gene designation" value="Mmp25"/>
</dbReference>
<dbReference type="VEuPathDB" id="HostDB:ENSMUSG00000023903"/>
<dbReference type="eggNOG" id="KOG1565">
    <property type="taxonomic scope" value="Eukaryota"/>
</dbReference>
<dbReference type="GeneTree" id="ENSGT00940000159799"/>
<dbReference type="HOGENOM" id="CLU_015489_8_2_1"/>
<dbReference type="InParanoid" id="Q3U435"/>
<dbReference type="OMA" id="PYYQGSV"/>
<dbReference type="OrthoDB" id="406838at2759"/>
<dbReference type="PhylomeDB" id="Q3U435"/>
<dbReference type="TreeFam" id="TF315428"/>
<dbReference type="Reactome" id="R-MMU-1592389">
    <property type="pathway name" value="Activation of Matrix Metalloproteinases"/>
</dbReference>
<dbReference type="Reactome" id="R-MMU-6798695">
    <property type="pathway name" value="Neutrophil degranulation"/>
</dbReference>
<dbReference type="BioGRID-ORCS" id="240047">
    <property type="hits" value="7 hits in 79 CRISPR screens"/>
</dbReference>
<dbReference type="ChiTaRS" id="Mmp25">
    <property type="organism name" value="mouse"/>
</dbReference>
<dbReference type="PRO" id="PR:Q3U435"/>
<dbReference type="Proteomes" id="UP000000589">
    <property type="component" value="Chromosome 17"/>
</dbReference>
<dbReference type="RNAct" id="Q3U435">
    <property type="molecule type" value="protein"/>
</dbReference>
<dbReference type="Bgee" id="ENSMUSG00000023903">
    <property type="expression patterns" value="Expressed in granulocyte and 31 other cell types or tissues"/>
</dbReference>
<dbReference type="ExpressionAtlas" id="Q3U435">
    <property type="expression patterns" value="baseline and differential"/>
</dbReference>
<dbReference type="GO" id="GO:0009986">
    <property type="term" value="C:cell surface"/>
    <property type="evidence" value="ECO:0000266"/>
    <property type="project" value="MGI"/>
</dbReference>
<dbReference type="GO" id="GO:0031012">
    <property type="term" value="C:extracellular matrix"/>
    <property type="evidence" value="ECO:0007669"/>
    <property type="project" value="InterPro"/>
</dbReference>
<dbReference type="GO" id="GO:0005886">
    <property type="term" value="C:plasma membrane"/>
    <property type="evidence" value="ECO:0000314"/>
    <property type="project" value="MGI"/>
</dbReference>
<dbReference type="GO" id="GO:0098552">
    <property type="term" value="C:side of membrane"/>
    <property type="evidence" value="ECO:0007669"/>
    <property type="project" value="UniProtKB-KW"/>
</dbReference>
<dbReference type="GO" id="GO:0004222">
    <property type="term" value="F:metalloendopeptidase activity"/>
    <property type="evidence" value="ECO:0007669"/>
    <property type="project" value="InterPro"/>
</dbReference>
<dbReference type="GO" id="GO:0016504">
    <property type="term" value="F:peptidase activator activity"/>
    <property type="evidence" value="ECO:0000266"/>
    <property type="project" value="MGI"/>
</dbReference>
<dbReference type="GO" id="GO:0008270">
    <property type="term" value="F:zinc ion binding"/>
    <property type="evidence" value="ECO:0007669"/>
    <property type="project" value="InterPro"/>
</dbReference>
<dbReference type="GO" id="GO:0060022">
    <property type="term" value="P:hard palate development"/>
    <property type="evidence" value="ECO:0000315"/>
    <property type="project" value="MGI"/>
</dbReference>
<dbReference type="GO" id="GO:0006508">
    <property type="term" value="P:proteolysis"/>
    <property type="evidence" value="ECO:0000266"/>
    <property type="project" value="MGI"/>
</dbReference>
<dbReference type="CDD" id="cd00094">
    <property type="entry name" value="HX"/>
    <property type="match status" value="1"/>
</dbReference>
<dbReference type="CDD" id="cd04278">
    <property type="entry name" value="ZnMc_MMP"/>
    <property type="match status" value="1"/>
</dbReference>
<dbReference type="FunFam" id="3.40.390.10:FF:000016">
    <property type="entry name" value="Matrix metallopeptidase 17"/>
    <property type="match status" value="1"/>
</dbReference>
<dbReference type="FunFam" id="2.110.10.10:FF:000016">
    <property type="entry name" value="Matrix metallopeptidase 25"/>
    <property type="match status" value="1"/>
</dbReference>
<dbReference type="Gene3D" id="3.40.390.10">
    <property type="entry name" value="Collagenase (Catalytic Domain)"/>
    <property type="match status" value="1"/>
</dbReference>
<dbReference type="Gene3D" id="2.110.10.10">
    <property type="entry name" value="Hemopexin-like domain"/>
    <property type="match status" value="1"/>
</dbReference>
<dbReference type="InterPro" id="IPR000585">
    <property type="entry name" value="Hemopexin-like_dom"/>
</dbReference>
<dbReference type="InterPro" id="IPR036375">
    <property type="entry name" value="Hemopexin-like_dom_sf"/>
</dbReference>
<dbReference type="InterPro" id="IPR018487">
    <property type="entry name" value="Hemopexin-like_repeat"/>
</dbReference>
<dbReference type="InterPro" id="IPR033739">
    <property type="entry name" value="M10A_MMP"/>
</dbReference>
<dbReference type="InterPro" id="IPR024079">
    <property type="entry name" value="MetalloPept_cat_dom_sf"/>
</dbReference>
<dbReference type="InterPro" id="IPR001818">
    <property type="entry name" value="Pept_M10_metallopeptidase"/>
</dbReference>
<dbReference type="InterPro" id="IPR021190">
    <property type="entry name" value="Pept_M10A"/>
</dbReference>
<dbReference type="InterPro" id="IPR006026">
    <property type="entry name" value="Peptidase_Metallo"/>
</dbReference>
<dbReference type="InterPro" id="IPR002477">
    <property type="entry name" value="Peptidoglycan-bd-like"/>
</dbReference>
<dbReference type="InterPro" id="IPR036365">
    <property type="entry name" value="PGBD-like_sf"/>
</dbReference>
<dbReference type="PANTHER" id="PTHR10201">
    <property type="entry name" value="MATRIX METALLOPROTEINASE"/>
    <property type="match status" value="1"/>
</dbReference>
<dbReference type="PANTHER" id="PTHR10201:SF142">
    <property type="entry name" value="MATRIX METALLOPROTEINASE-25"/>
    <property type="match status" value="1"/>
</dbReference>
<dbReference type="Pfam" id="PF00045">
    <property type="entry name" value="Hemopexin"/>
    <property type="match status" value="4"/>
</dbReference>
<dbReference type="Pfam" id="PF00413">
    <property type="entry name" value="Peptidase_M10"/>
    <property type="match status" value="1"/>
</dbReference>
<dbReference type="Pfam" id="PF01471">
    <property type="entry name" value="PG_binding_1"/>
    <property type="match status" value="1"/>
</dbReference>
<dbReference type="PIRSF" id="PIRSF001191">
    <property type="entry name" value="Peptidase_M10A_matrix"/>
    <property type="match status" value="1"/>
</dbReference>
<dbReference type="PRINTS" id="PR00138">
    <property type="entry name" value="MATRIXIN"/>
</dbReference>
<dbReference type="SMART" id="SM00120">
    <property type="entry name" value="HX"/>
    <property type="match status" value="4"/>
</dbReference>
<dbReference type="SMART" id="SM00235">
    <property type="entry name" value="ZnMc"/>
    <property type="match status" value="1"/>
</dbReference>
<dbReference type="SUPFAM" id="SSF50923">
    <property type="entry name" value="Hemopexin-like domain"/>
    <property type="match status" value="1"/>
</dbReference>
<dbReference type="SUPFAM" id="SSF55486">
    <property type="entry name" value="Metalloproteases ('zincins'), catalytic domain"/>
    <property type="match status" value="1"/>
</dbReference>
<dbReference type="SUPFAM" id="SSF47090">
    <property type="entry name" value="PGBD-like"/>
    <property type="match status" value="1"/>
</dbReference>
<dbReference type="PROSITE" id="PS51642">
    <property type="entry name" value="HEMOPEXIN_2"/>
    <property type="match status" value="4"/>
</dbReference>
<dbReference type="PROSITE" id="PS00142">
    <property type="entry name" value="ZINC_PROTEASE"/>
    <property type="match status" value="1"/>
</dbReference>
<keyword id="KW-0106">Calcium</keyword>
<keyword id="KW-1003">Cell membrane</keyword>
<keyword id="KW-1015">Disulfide bond</keyword>
<keyword id="KW-0325">Glycoprotein</keyword>
<keyword id="KW-0336">GPI-anchor</keyword>
<keyword id="KW-0378">Hydrolase</keyword>
<keyword id="KW-0449">Lipoprotein</keyword>
<keyword id="KW-0472">Membrane</keyword>
<keyword id="KW-0479">Metal-binding</keyword>
<keyword id="KW-0482">Metalloprotease</keyword>
<keyword id="KW-0645">Protease</keyword>
<keyword id="KW-1185">Reference proteome</keyword>
<keyword id="KW-0677">Repeat</keyword>
<keyword id="KW-0812">Transmembrane</keyword>
<keyword id="KW-1133">Transmembrane helix</keyword>
<keyword id="KW-0862">Zinc</keyword>
<keyword id="KW-0865">Zymogen</keyword>
<comment type="function">
    <text evidence="1">May activate progelatinase A.</text>
</comment>
<comment type="cofactor">
    <cofactor evidence="1">
        <name>Zn(2+)</name>
        <dbReference type="ChEBI" id="CHEBI:29105"/>
    </cofactor>
    <text evidence="1">Binds 1 zinc ion per subunit.</text>
</comment>
<comment type="cofactor">
    <cofactor evidence="1">
        <name>Ca(2+)</name>
        <dbReference type="ChEBI" id="CHEBI:29108"/>
    </cofactor>
</comment>
<comment type="subcellular location">
    <subcellularLocation>
        <location evidence="5">Cell membrane</location>
        <topology evidence="5">Lipid-anchor</topology>
        <topology evidence="5">GPI-anchor</topology>
    </subcellularLocation>
</comment>
<comment type="domain">
    <text>The conserved cysteine present in the cysteine-switch motif binds the catalytic zinc ion, thus inhibiting the enzyme. The dissociation of the cysteine from the zinc ion upon the activation-peptide release activates the enzyme.</text>
</comment>
<comment type="PTM">
    <text evidence="1">The precursor is cleaved by a furin endopeptidase.</text>
</comment>
<comment type="similarity">
    <text evidence="5">Belongs to the peptidase M10A family.</text>
</comment>
<comment type="caution">
    <text evidence="5">In contrast to the human ortholog it does not have a signal sequence as it has an additional 53 residue sequence at the N-terminus. At the position of the human initiation methionine there is a leucine (Leu-54).</text>
</comment>
<evidence type="ECO:0000250" key="1"/>
<evidence type="ECO:0000255" key="2"/>
<evidence type="ECO:0000255" key="3">
    <source>
        <dbReference type="PROSITE-ProRule" id="PRU10095"/>
    </source>
</evidence>
<evidence type="ECO:0000256" key="4">
    <source>
        <dbReference type="SAM" id="MobiDB-lite"/>
    </source>
</evidence>
<evidence type="ECO:0000305" key="5"/>
<sequence>MCFPGSQISPARLYYLVSAPWICTGSLTSSRLPRRRESGPLRVPPRSVQAERILRLPAFGLPLLALLLVPLLPVRAQNPDAKVVSMGVEWLTRYGYLPPADPVHAQMQSLEKLQDAIKVMQRFAGLPETGQMDPMTIKTMRKPRCSLPDVLGAAGLVRRRRRYSLSGSVWKKRTLTWSIRSFSQKSQLSPQIVRTLLSYALAVWATESGLTFQEVNSQYQEPDIIIHFARAYHQDSYPFDGSGGTLAHAFFPGEHPISGDTHFDDEETWTFGSTDDNGIDLFAVAVHEFGHALGLGHSSAPNSIMRPFYQGPVGDPATYRLPQDDRDGLQQLYGRVSQNPNARPTRKPLVPPPQPPAMPPDSPATPVPDRCEGNFDAVANIRGEIFLFKGPWFWRLQPSGQLVSPRPAGLHRFWEGLPTHVKVIQAAYARPLDGRIILFSGPQFWVFQERQLEGAARPLVEFGLPPGEDVDAVFSWPHNGKTYLIRGQKYWRYDEVAARPDPGYPRALSLWDGAPFAPDDVTISNTGDTYFFKGTHFWRFAEGSVKAESDSPQPIGPKWLDCPAPNSDPRVTSPPKTTSKTRSCDCHCELNQASEQLSPLLLPLLPLVAGEVFSY</sequence>
<name>MMP25_MOUSE</name>
<protein>
    <recommendedName>
        <fullName>Matrix metalloproteinase-25</fullName>
        <shortName>MMP-25</shortName>
        <ecNumber>3.4.24.-</ecNumber>
    </recommendedName>
</protein>
<feature type="propeptide" id="PRO_0000288635" evidence="1">
    <location>
        <begin position="1"/>
        <end position="162"/>
    </location>
</feature>
<feature type="chain" id="PRO_0000288636" description="Matrix metalloproteinase-25">
    <location>
        <begin position="163"/>
        <end position="593"/>
    </location>
</feature>
<feature type="propeptide" id="PRO_0000288637" description="Removed in mature form" evidence="2">
    <location>
        <begin position="594"/>
        <end position="615"/>
    </location>
</feature>
<feature type="transmembrane region" description="Helical" evidence="2">
    <location>
        <begin position="53"/>
        <end position="73"/>
    </location>
</feature>
<feature type="repeat" description="Hemopexin 1">
    <location>
        <begin position="368"/>
        <end position="417"/>
    </location>
</feature>
<feature type="repeat" description="Hemopexin 2">
    <location>
        <begin position="421"/>
        <end position="466"/>
    </location>
</feature>
<feature type="repeat" description="Hemopexin 3">
    <location>
        <begin position="467"/>
        <end position="515"/>
    </location>
</feature>
<feature type="repeat" description="Hemopexin 4">
    <location>
        <begin position="516"/>
        <end position="562"/>
    </location>
</feature>
<feature type="region of interest" description="Disordered" evidence="4">
    <location>
        <begin position="336"/>
        <end position="366"/>
    </location>
</feature>
<feature type="region of interest" description="Disordered" evidence="4">
    <location>
        <begin position="547"/>
        <end position="582"/>
    </location>
</feature>
<feature type="short sequence motif" description="Cysteine switch" evidence="1">
    <location>
        <begin position="143"/>
        <end position="150"/>
    </location>
</feature>
<feature type="compositionally biased region" description="Pro residues" evidence="4">
    <location>
        <begin position="349"/>
        <end position="366"/>
    </location>
</feature>
<feature type="active site" evidence="3">
    <location>
        <position position="288"/>
    </location>
</feature>
<feature type="binding site" description="in inhibited form" evidence="1">
    <location>
        <position position="145"/>
    </location>
    <ligand>
        <name>Zn(2+)</name>
        <dbReference type="ChEBI" id="CHEBI:29105"/>
        <note>catalytic</note>
    </ligand>
</feature>
<feature type="binding site" evidence="3">
    <location>
        <position position="287"/>
    </location>
    <ligand>
        <name>Zn(2+)</name>
        <dbReference type="ChEBI" id="CHEBI:29105"/>
        <note>catalytic</note>
    </ligand>
</feature>
<feature type="binding site" evidence="3">
    <location>
        <position position="291"/>
    </location>
    <ligand>
        <name>Zn(2+)</name>
        <dbReference type="ChEBI" id="CHEBI:29105"/>
        <note>catalytic</note>
    </ligand>
</feature>
<feature type="binding site" evidence="3">
    <location>
        <position position="297"/>
    </location>
    <ligand>
        <name>Zn(2+)</name>
        <dbReference type="ChEBI" id="CHEBI:29105"/>
        <note>catalytic</note>
    </ligand>
</feature>
<feature type="lipid moiety-binding region" description="GPI-anchor amidated alanine" evidence="2">
    <location>
        <position position="593"/>
    </location>
</feature>
<feature type="disulfide bond" evidence="1">
    <location>
        <begin position="371"/>
        <end position="562"/>
    </location>
</feature>